<evidence type="ECO:0000255" key="1">
    <source>
        <dbReference type="HAMAP-Rule" id="MF_00736"/>
    </source>
</evidence>
<evidence type="ECO:0000305" key="2"/>
<gene>
    <name evidence="1" type="primary">rplK</name>
    <name type="ordered locus">JJD26997_1460</name>
</gene>
<sequence length="141" mass="15080">MAKKVVGEIKLQIAATKANPSPPVGPALGQQGVNIMEFCKAFNERTKDMAGFNIPVVITVYADKSFTFITKQPPATDLIKKAAGISKGTDNPLKNKVGKLTRAQVLEIVDKKIADLNTKDRDQAAKIIAGSARSMGVEIVD</sequence>
<proteinExistence type="inferred from homology"/>
<dbReference type="EMBL" id="CP000768">
    <property type="protein sequence ID" value="ABS43539.1"/>
    <property type="molecule type" value="Genomic_DNA"/>
</dbReference>
<dbReference type="SMR" id="A7H4Q9"/>
<dbReference type="KEGG" id="cjd:JJD26997_1460"/>
<dbReference type="HOGENOM" id="CLU_074237_2_0_7"/>
<dbReference type="Proteomes" id="UP000002302">
    <property type="component" value="Chromosome"/>
</dbReference>
<dbReference type="GO" id="GO:0022625">
    <property type="term" value="C:cytosolic large ribosomal subunit"/>
    <property type="evidence" value="ECO:0007669"/>
    <property type="project" value="TreeGrafter"/>
</dbReference>
<dbReference type="GO" id="GO:0070180">
    <property type="term" value="F:large ribosomal subunit rRNA binding"/>
    <property type="evidence" value="ECO:0007669"/>
    <property type="project" value="UniProtKB-UniRule"/>
</dbReference>
<dbReference type="GO" id="GO:0003735">
    <property type="term" value="F:structural constituent of ribosome"/>
    <property type="evidence" value="ECO:0007669"/>
    <property type="project" value="InterPro"/>
</dbReference>
<dbReference type="GO" id="GO:0006412">
    <property type="term" value="P:translation"/>
    <property type="evidence" value="ECO:0007669"/>
    <property type="project" value="UniProtKB-UniRule"/>
</dbReference>
<dbReference type="CDD" id="cd00349">
    <property type="entry name" value="Ribosomal_L11"/>
    <property type="match status" value="1"/>
</dbReference>
<dbReference type="FunFam" id="1.10.10.250:FF:000001">
    <property type="entry name" value="50S ribosomal protein L11"/>
    <property type="match status" value="1"/>
</dbReference>
<dbReference type="FunFam" id="3.30.1550.10:FF:000001">
    <property type="entry name" value="50S ribosomal protein L11"/>
    <property type="match status" value="1"/>
</dbReference>
<dbReference type="Gene3D" id="1.10.10.250">
    <property type="entry name" value="Ribosomal protein L11, C-terminal domain"/>
    <property type="match status" value="1"/>
</dbReference>
<dbReference type="Gene3D" id="3.30.1550.10">
    <property type="entry name" value="Ribosomal protein L11/L12, N-terminal domain"/>
    <property type="match status" value="1"/>
</dbReference>
<dbReference type="HAMAP" id="MF_00736">
    <property type="entry name" value="Ribosomal_uL11"/>
    <property type="match status" value="1"/>
</dbReference>
<dbReference type="InterPro" id="IPR000911">
    <property type="entry name" value="Ribosomal_uL11"/>
</dbReference>
<dbReference type="InterPro" id="IPR006519">
    <property type="entry name" value="Ribosomal_uL11_bac-typ"/>
</dbReference>
<dbReference type="InterPro" id="IPR020783">
    <property type="entry name" value="Ribosomal_uL11_C"/>
</dbReference>
<dbReference type="InterPro" id="IPR036769">
    <property type="entry name" value="Ribosomal_uL11_C_sf"/>
</dbReference>
<dbReference type="InterPro" id="IPR020785">
    <property type="entry name" value="Ribosomal_uL11_CS"/>
</dbReference>
<dbReference type="InterPro" id="IPR020784">
    <property type="entry name" value="Ribosomal_uL11_N"/>
</dbReference>
<dbReference type="InterPro" id="IPR036796">
    <property type="entry name" value="Ribosomal_uL11_N_sf"/>
</dbReference>
<dbReference type="NCBIfam" id="TIGR01632">
    <property type="entry name" value="L11_bact"/>
    <property type="match status" value="1"/>
</dbReference>
<dbReference type="PANTHER" id="PTHR11661">
    <property type="entry name" value="60S RIBOSOMAL PROTEIN L12"/>
    <property type="match status" value="1"/>
</dbReference>
<dbReference type="PANTHER" id="PTHR11661:SF1">
    <property type="entry name" value="LARGE RIBOSOMAL SUBUNIT PROTEIN UL11M"/>
    <property type="match status" value="1"/>
</dbReference>
<dbReference type="Pfam" id="PF00298">
    <property type="entry name" value="Ribosomal_L11"/>
    <property type="match status" value="1"/>
</dbReference>
<dbReference type="Pfam" id="PF03946">
    <property type="entry name" value="Ribosomal_L11_N"/>
    <property type="match status" value="1"/>
</dbReference>
<dbReference type="SMART" id="SM00649">
    <property type="entry name" value="RL11"/>
    <property type="match status" value="1"/>
</dbReference>
<dbReference type="SUPFAM" id="SSF54747">
    <property type="entry name" value="Ribosomal L11/L12e N-terminal domain"/>
    <property type="match status" value="1"/>
</dbReference>
<dbReference type="SUPFAM" id="SSF46906">
    <property type="entry name" value="Ribosomal protein L11, C-terminal domain"/>
    <property type="match status" value="1"/>
</dbReference>
<dbReference type="PROSITE" id="PS00359">
    <property type="entry name" value="RIBOSOMAL_L11"/>
    <property type="match status" value="1"/>
</dbReference>
<name>RL11_CAMJD</name>
<organism>
    <name type="scientific">Campylobacter jejuni subsp. doylei (strain ATCC BAA-1458 / RM4099 / 269.97)</name>
    <dbReference type="NCBI Taxonomy" id="360109"/>
    <lineage>
        <taxon>Bacteria</taxon>
        <taxon>Pseudomonadati</taxon>
        <taxon>Campylobacterota</taxon>
        <taxon>Epsilonproteobacteria</taxon>
        <taxon>Campylobacterales</taxon>
        <taxon>Campylobacteraceae</taxon>
        <taxon>Campylobacter</taxon>
    </lineage>
</organism>
<accession>A7H4Q9</accession>
<reference key="1">
    <citation type="submission" date="2007-07" db="EMBL/GenBank/DDBJ databases">
        <title>Complete genome sequence of Campylobacter jejuni subsp doylei 269.97 isolated from human blood.</title>
        <authorList>
            <person name="Fouts D.E."/>
            <person name="Mongodin E.F."/>
            <person name="Puiu D."/>
            <person name="Sebastian Y."/>
            <person name="Miller W.G."/>
            <person name="Mandrell R.E."/>
            <person name="Lastovica A.J."/>
            <person name="Nelson K.E."/>
        </authorList>
    </citation>
    <scope>NUCLEOTIDE SEQUENCE [LARGE SCALE GENOMIC DNA]</scope>
    <source>
        <strain>ATCC BAA-1458 / RM4099 / 269.97</strain>
    </source>
</reference>
<comment type="function">
    <text evidence="1">Forms part of the ribosomal stalk which helps the ribosome interact with GTP-bound translation factors.</text>
</comment>
<comment type="subunit">
    <text evidence="1">Part of the ribosomal stalk of the 50S ribosomal subunit. Interacts with L10 and the large rRNA to form the base of the stalk. L10 forms an elongated spine to which L12 dimers bind in a sequential fashion forming a multimeric L10(L12)X complex.</text>
</comment>
<comment type="PTM">
    <text evidence="1">One or more lysine residues are methylated.</text>
</comment>
<comment type="similarity">
    <text evidence="1">Belongs to the universal ribosomal protein uL11 family.</text>
</comment>
<keyword id="KW-0488">Methylation</keyword>
<keyword id="KW-0687">Ribonucleoprotein</keyword>
<keyword id="KW-0689">Ribosomal protein</keyword>
<keyword id="KW-0694">RNA-binding</keyword>
<keyword id="KW-0699">rRNA-binding</keyword>
<protein>
    <recommendedName>
        <fullName evidence="1">Large ribosomal subunit protein uL11</fullName>
    </recommendedName>
    <alternativeName>
        <fullName evidence="2">50S ribosomal protein L11</fullName>
    </alternativeName>
</protein>
<feature type="chain" id="PRO_1000046162" description="Large ribosomal subunit protein uL11">
    <location>
        <begin position="1"/>
        <end position="141"/>
    </location>
</feature>